<organism>
    <name type="scientific">Oryctolagus cuniculus</name>
    <name type="common">Rabbit</name>
    <dbReference type="NCBI Taxonomy" id="9986"/>
    <lineage>
        <taxon>Eukaryota</taxon>
        <taxon>Metazoa</taxon>
        <taxon>Chordata</taxon>
        <taxon>Craniata</taxon>
        <taxon>Vertebrata</taxon>
        <taxon>Euteleostomi</taxon>
        <taxon>Mammalia</taxon>
        <taxon>Eutheria</taxon>
        <taxon>Euarchontoglires</taxon>
        <taxon>Glires</taxon>
        <taxon>Lagomorpha</taxon>
        <taxon>Leporidae</taxon>
        <taxon>Oryctolagus</taxon>
    </lineage>
</organism>
<feature type="chain" id="PRO_0000063646" description="Keratin, type I cytoskeletal 12">
    <location>
        <begin position="1" status="less than"/>
        <end position="411"/>
    </location>
</feature>
<feature type="domain" description="IF rod" evidence="2">
    <location>
        <begin position="43"/>
        <end position="359"/>
    </location>
</feature>
<feature type="region of interest" description="Head">
    <location>
        <begin position="1" status="less than"/>
        <end position="42"/>
    </location>
</feature>
<feature type="region of interest" description="Coil 1A">
    <location>
        <begin position="43"/>
        <end position="78"/>
    </location>
</feature>
<feature type="region of interest" description="Linker 1">
    <location>
        <begin position="83"/>
        <end position="101"/>
    </location>
</feature>
<feature type="region of interest" description="Coil 1B">
    <location>
        <begin position="102"/>
        <end position="193"/>
    </location>
</feature>
<feature type="region of interest" description="Linker 12">
    <location>
        <begin position="194"/>
        <end position="216"/>
    </location>
</feature>
<feature type="region of interest" description="Coil 2">
    <location>
        <begin position="217"/>
        <end position="354"/>
    </location>
</feature>
<feature type="region of interest" description="Tail">
    <location>
        <begin position="355"/>
        <end position="411"/>
    </location>
</feature>
<feature type="region of interest" description="Disordered" evidence="3">
    <location>
        <begin position="356"/>
        <end position="387"/>
    </location>
</feature>
<feature type="compositionally biased region" description="Polar residues" evidence="3">
    <location>
        <begin position="365"/>
        <end position="378"/>
    </location>
</feature>
<feature type="non-terminal residue">
    <location>
        <position position="1"/>
    </location>
</feature>
<evidence type="ECO:0000250" key="1">
    <source>
        <dbReference type="UniProtKB" id="Q64291"/>
    </source>
</evidence>
<evidence type="ECO:0000255" key="2">
    <source>
        <dbReference type="PROSITE-ProRule" id="PRU01188"/>
    </source>
</evidence>
<evidence type="ECO:0000256" key="3">
    <source>
        <dbReference type="SAM" id="MobiDB-lite"/>
    </source>
</evidence>
<evidence type="ECO:0000269" key="4">
    <source>
    </source>
</evidence>
<reference key="1">
    <citation type="journal article" date="1994" name="Differentiation">
        <title>Lineage-specific and differentiation-dependent expression of K12 keratin in rabbit corneal/limbal epithelial cells: cDNA cloning and northern blot analysis.</title>
        <authorList>
            <person name="Wu R.-L."/>
            <person name="Zhu G."/>
            <person name="Galvin S."/>
            <person name="Xu C."/>
            <person name="Haseba T."/>
            <person name="Chaloin-Dufau C."/>
            <person name="Dhouailly D."/>
            <person name="Wei Z.-G."/>
            <person name="Lavker R.M."/>
            <person name="Kao W.-Y."/>
            <person name="Sun T.-T."/>
        </authorList>
    </citation>
    <scope>NUCLEOTIDE SEQUENCE [MRNA]</scope>
    <scope>TISSUE SPECIFICITY</scope>
    <source>
        <tissue>Cornea</tissue>
    </source>
</reference>
<accession>Q28706</accession>
<proteinExistence type="evidence at transcript level"/>
<dbReference type="EMBL" id="X77665">
    <property type="protein sequence ID" value="CAA54741.1"/>
    <property type="molecule type" value="mRNA"/>
</dbReference>
<dbReference type="PIR" id="S45318">
    <property type="entry name" value="S45318"/>
</dbReference>
<dbReference type="SMR" id="Q28706"/>
<dbReference type="FunCoup" id="Q28706">
    <property type="interactions" value="1"/>
</dbReference>
<dbReference type="STRING" id="9986.ENSOCUP00000015186"/>
<dbReference type="PaxDb" id="9986-ENSOCUP00000015186"/>
<dbReference type="eggNOG" id="ENOG502QV0B">
    <property type="taxonomic scope" value="Eukaryota"/>
</dbReference>
<dbReference type="InParanoid" id="Q28706"/>
<dbReference type="Proteomes" id="UP000001811">
    <property type="component" value="Unplaced"/>
</dbReference>
<dbReference type="GO" id="GO:0005882">
    <property type="term" value="C:intermediate filament"/>
    <property type="evidence" value="ECO:0007669"/>
    <property type="project" value="UniProtKB-KW"/>
</dbReference>
<dbReference type="GO" id="GO:0005198">
    <property type="term" value="F:structural molecule activity"/>
    <property type="evidence" value="ECO:0007669"/>
    <property type="project" value="InterPro"/>
</dbReference>
<dbReference type="GO" id="GO:0061303">
    <property type="term" value="P:cornea development in camera-type eye"/>
    <property type="evidence" value="ECO:0000250"/>
    <property type="project" value="UniProtKB"/>
</dbReference>
<dbReference type="GO" id="GO:0030855">
    <property type="term" value="P:epithelial cell differentiation"/>
    <property type="evidence" value="ECO:0007669"/>
    <property type="project" value="TreeGrafter"/>
</dbReference>
<dbReference type="GO" id="GO:0045109">
    <property type="term" value="P:intermediate filament organization"/>
    <property type="evidence" value="ECO:0007669"/>
    <property type="project" value="TreeGrafter"/>
</dbReference>
<dbReference type="GO" id="GO:0002009">
    <property type="term" value="P:morphogenesis of an epithelium"/>
    <property type="evidence" value="ECO:0000250"/>
    <property type="project" value="UniProtKB"/>
</dbReference>
<dbReference type="FunFam" id="1.20.5.1160:FF:000002">
    <property type="entry name" value="Type I keratin 10"/>
    <property type="match status" value="1"/>
</dbReference>
<dbReference type="FunFam" id="1.20.5.170:FF:000002">
    <property type="entry name" value="Type I keratin KA11"/>
    <property type="match status" value="1"/>
</dbReference>
<dbReference type="FunFam" id="1.20.5.500:FF:000001">
    <property type="entry name" value="Type II keratin 23"/>
    <property type="match status" value="1"/>
</dbReference>
<dbReference type="Gene3D" id="1.20.5.170">
    <property type="match status" value="1"/>
</dbReference>
<dbReference type="Gene3D" id="1.20.5.500">
    <property type="entry name" value="Single helix bin"/>
    <property type="match status" value="1"/>
</dbReference>
<dbReference type="Gene3D" id="1.20.5.1160">
    <property type="entry name" value="Vasodilator-stimulated phosphoprotein"/>
    <property type="match status" value="1"/>
</dbReference>
<dbReference type="InterPro" id="IPR018039">
    <property type="entry name" value="IF_conserved"/>
</dbReference>
<dbReference type="InterPro" id="IPR039008">
    <property type="entry name" value="IF_rod_dom"/>
</dbReference>
<dbReference type="InterPro" id="IPR002957">
    <property type="entry name" value="Keratin_I"/>
</dbReference>
<dbReference type="PANTHER" id="PTHR23239">
    <property type="entry name" value="INTERMEDIATE FILAMENT"/>
    <property type="match status" value="1"/>
</dbReference>
<dbReference type="PANTHER" id="PTHR23239:SF369">
    <property type="entry name" value="KERATIN, TYPE I CYTOSKELETAL 12"/>
    <property type="match status" value="1"/>
</dbReference>
<dbReference type="Pfam" id="PF00038">
    <property type="entry name" value="Filament"/>
    <property type="match status" value="1"/>
</dbReference>
<dbReference type="PRINTS" id="PR01248">
    <property type="entry name" value="TYPE1KERATIN"/>
</dbReference>
<dbReference type="SMART" id="SM01391">
    <property type="entry name" value="Filament"/>
    <property type="match status" value="1"/>
</dbReference>
<dbReference type="SUPFAM" id="SSF64593">
    <property type="entry name" value="Intermediate filament protein, coiled coil region"/>
    <property type="match status" value="2"/>
</dbReference>
<dbReference type="PROSITE" id="PS00226">
    <property type="entry name" value="IF_ROD_1"/>
    <property type="match status" value="1"/>
</dbReference>
<dbReference type="PROSITE" id="PS51842">
    <property type="entry name" value="IF_ROD_2"/>
    <property type="match status" value="1"/>
</dbReference>
<gene>
    <name type="primary">KRT12</name>
</gene>
<protein>
    <recommendedName>
        <fullName>Keratin, type I cytoskeletal 12</fullName>
    </recommendedName>
    <alternativeName>
        <fullName>Cytokeratin-12</fullName>
        <shortName>CK-12</shortName>
    </alternativeName>
    <alternativeName>
        <fullName>Keratin-12</fullName>
        <shortName>K12</shortName>
    </alternativeName>
</protein>
<name>K1C12_RABIT</name>
<comment type="function">
    <text evidence="1">Involved in corneal epithelium organization, integrity and corneal keratin expression.</text>
</comment>
<comment type="subunit">
    <text>Heterotetramer of two type I and two type II keratins. Keratin-3 associates with keratin-12.</text>
</comment>
<comment type="tissue specificity">
    <text evidence="4">Cornea specific. Associated mainly with all layers of the central corneal epithelium and also found in the suprabasal limbal epithelium.</text>
</comment>
<comment type="miscellaneous">
    <text>There are two types of cytoskeletal and microfibrillar keratin: I (acidic; 40-55 kDa) and II (neutral to basic; 56-70 kDa).</text>
</comment>
<comment type="similarity">
    <text evidence="2">Belongs to the intermediate filament family.</text>
</comment>
<sequence>DHDYEFPGIQAFAGLGMGFGGSPGGGSLYLPSGNDGGLLSGSEKETMQNLNDRLASYLDKVRALEDANAELENKIREWYEARGHGHGDCGPQHDYSKYHPLIEDLRNKIISASIGNAQLILQIDNARLAADDFRMKFENEAALRQTVEADINGLRRVLDELTLARADLEAQIESLTEELAYMKKNHEEELQSCRAGGPGEVSVEMDAAPGVDLTRLLNDMRAQYEAIAEQNRKDAEAWFIEKSGELRKEISTNTEQLQSSKSEVTDLRRALQNLEIELQSQLAMKKSLEDSLAETEGDYCGQLSQVQQLVGDLEAQLQQVRSDTERQNMDYQRLLNVKARLELEIETYRRLLDGEAQGDGLDESSAMTGSRSQAQSIDSSKDPSKTRKIKTIVQEVVNGEVVSSQVQEIQN</sequence>
<keyword id="KW-0175">Coiled coil</keyword>
<keyword id="KW-0403">Intermediate filament</keyword>
<keyword id="KW-0416">Keratin</keyword>
<keyword id="KW-1185">Reference proteome</keyword>